<name>MINE_XYLFM</name>
<proteinExistence type="inferred from homology"/>
<dbReference type="EMBL" id="CP000941">
    <property type="protein sequence ID" value="ACA11676.1"/>
    <property type="molecule type" value="Genomic_DNA"/>
</dbReference>
<dbReference type="RefSeq" id="WP_004083896.1">
    <property type="nucleotide sequence ID" value="NC_010513.1"/>
</dbReference>
<dbReference type="SMR" id="B0U6B4"/>
<dbReference type="KEGG" id="xfm:Xfasm12_0678"/>
<dbReference type="HOGENOM" id="CLU_137929_2_1_6"/>
<dbReference type="GO" id="GO:0051301">
    <property type="term" value="P:cell division"/>
    <property type="evidence" value="ECO:0007669"/>
    <property type="project" value="UniProtKB-KW"/>
</dbReference>
<dbReference type="GO" id="GO:0032955">
    <property type="term" value="P:regulation of division septum assembly"/>
    <property type="evidence" value="ECO:0007669"/>
    <property type="project" value="InterPro"/>
</dbReference>
<dbReference type="FunFam" id="3.30.1070.10:FF:000001">
    <property type="entry name" value="Cell division topological specificity factor"/>
    <property type="match status" value="1"/>
</dbReference>
<dbReference type="Gene3D" id="3.30.1070.10">
    <property type="entry name" value="Cell division topological specificity factor MinE"/>
    <property type="match status" value="1"/>
</dbReference>
<dbReference type="HAMAP" id="MF_00262">
    <property type="entry name" value="MinE"/>
    <property type="match status" value="1"/>
</dbReference>
<dbReference type="InterPro" id="IPR005527">
    <property type="entry name" value="MinE"/>
</dbReference>
<dbReference type="InterPro" id="IPR036707">
    <property type="entry name" value="MinE_sf"/>
</dbReference>
<dbReference type="NCBIfam" id="TIGR01215">
    <property type="entry name" value="minE"/>
    <property type="match status" value="1"/>
</dbReference>
<dbReference type="NCBIfam" id="NF001422">
    <property type="entry name" value="PRK00296.1"/>
    <property type="match status" value="1"/>
</dbReference>
<dbReference type="Pfam" id="PF03776">
    <property type="entry name" value="MinE"/>
    <property type="match status" value="1"/>
</dbReference>
<dbReference type="SUPFAM" id="SSF55229">
    <property type="entry name" value="Cell division protein MinE topological specificity domain"/>
    <property type="match status" value="1"/>
</dbReference>
<evidence type="ECO:0000255" key="1">
    <source>
        <dbReference type="HAMAP-Rule" id="MF_00262"/>
    </source>
</evidence>
<keyword id="KW-0131">Cell cycle</keyword>
<keyword id="KW-0132">Cell division</keyword>
<comment type="function">
    <text evidence="1">Prevents the cell division inhibition by proteins MinC and MinD at internal division sites while permitting inhibition at polar sites. This ensures cell division at the proper site by restricting the formation of a division septum at the midpoint of the long axis of the cell.</text>
</comment>
<comment type="similarity">
    <text evidence="1">Belongs to the MinE family.</text>
</comment>
<sequence>MGLIDFLRNKTKTAETAKNRLQIIIAQERTQRGGPDYLPLLQRELLEVIKKYVKIDANAVKVDLIKDGANDVLDISVALPDDSER</sequence>
<reference key="1">
    <citation type="journal article" date="2010" name="J. Bacteriol.">
        <title>Whole genome sequences of two Xylella fastidiosa strains (M12 and M23) causing almond leaf scorch disease in California.</title>
        <authorList>
            <person name="Chen J."/>
            <person name="Xie G."/>
            <person name="Han S."/>
            <person name="Chertkov O."/>
            <person name="Sims D."/>
            <person name="Civerolo E.L."/>
        </authorList>
    </citation>
    <scope>NUCLEOTIDE SEQUENCE [LARGE SCALE GENOMIC DNA]</scope>
    <source>
        <strain>M12</strain>
    </source>
</reference>
<protein>
    <recommendedName>
        <fullName evidence="1">Cell division topological specificity factor</fullName>
    </recommendedName>
</protein>
<gene>
    <name evidence="1" type="primary">minE</name>
    <name type="ordered locus">Xfasm12_0678</name>
</gene>
<feature type="chain" id="PRO_1000114255" description="Cell division topological specificity factor">
    <location>
        <begin position="1"/>
        <end position="85"/>
    </location>
</feature>
<organism>
    <name type="scientific">Xylella fastidiosa (strain M12)</name>
    <dbReference type="NCBI Taxonomy" id="405440"/>
    <lineage>
        <taxon>Bacteria</taxon>
        <taxon>Pseudomonadati</taxon>
        <taxon>Pseudomonadota</taxon>
        <taxon>Gammaproteobacteria</taxon>
        <taxon>Lysobacterales</taxon>
        <taxon>Lysobacteraceae</taxon>
        <taxon>Xylella</taxon>
    </lineage>
</organism>
<accession>B0U6B4</accession>